<protein>
    <recommendedName>
        <fullName evidence="1">Ribosomal protein uS12 methylthiotransferase RimO</fullName>
        <shortName evidence="1">uS12 MTTase</shortName>
        <shortName evidence="1">uS12 methylthiotransferase</shortName>
        <ecNumber evidence="1">2.8.4.4</ecNumber>
    </recommendedName>
    <alternativeName>
        <fullName evidence="1">Ribosomal protein uS12 (aspartate-C(3))-methylthiotransferase</fullName>
    </alternativeName>
    <alternativeName>
        <fullName evidence="1">Ribosome maturation factor RimO</fullName>
    </alternativeName>
</protein>
<evidence type="ECO:0000255" key="1">
    <source>
        <dbReference type="HAMAP-Rule" id="MF_01865"/>
    </source>
</evidence>
<evidence type="ECO:0000255" key="2">
    <source>
        <dbReference type="PROSITE-ProRule" id="PRU01266"/>
    </source>
</evidence>
<keyword id="KW-0004">4Fe-4S</keyword>
<keyword id="KW-0963">Cytoplasm</keyword>
<keyword id="KW-0408">Iron</keyword>
<keyword id="KW-0411">Iron-sulfur</keyword>
<keyword id="KW-0479">Metal-binding</keyword>
<keyword id="KW-0949">S-adenosyl-L-methionine</keyword>
<keyword id="KW-0808">Transferase</keyword>
<proteinExistence type="inferred from homology"/>
<gene>
    <name evidence="1" type="primary">rimO</name>
    <name type="ordered locus">KPN78578_08410</name>
    <name type="ORF">KPN_00866</name>
</gene>
<feature type="chain" id="PRO_0000374871" description="Ribosomal protein uS12 methylthiotransferase RimO">
    <location>
        <begin position="1"/>
        <end position="441"/>
    </location>
</feature>
<feature type="domain" description="MTTase N-terminal" evidence="1">
    <location>
        <begin position="8"/>
        <end position="118"/>
    </location>
</feature>
<feature type="domain" description="Radical SAM core" evidence="2">
    <location>
        <begin position="136"/>
        <end position="373"/>
    </location>
</feature>
<feature type="domain" description="TRAM" evidence="1">
    <location>
        <begin position="376"/>
        <end position="441"/>
    </location>
</feature>
<feature type="binding site" evidence="1">
    <location>
        <position position="17"/>
    </location>
    <ligand>
        <name>[4Fe-4S] cluster</name>
        <dbReference type="ChEBI" id="CHEBI:49883"/>
        <label>1</label>
    </ligand>
</feature>
<feature type="binding site" evidence="1">
    <location>
        <position position="53"/>
    </location>
    <ligand>
        <name>[4Fe-4S] cluster</name>
        <dbReference type="ChEBI" id="CHEBI:49883"/>
        <label>1</label>
    </ligand>
</feature>
<feature type="binding site" evidence="1">
    <location>
        <position position="82"/>
    </location>
    <ligand>
        <name>[4Fe-4S] cluster</name>
        <dbReference type="ChEBI" id="CHEBI:49883"/>
        <label>1</label>
    </ligand>
</feature>
<feature type="binding site" evidence="1">
    <location>
        <position position="150"/>
    </location>
    <ligand>
        <name>[4Fe-4S] cluster</name>
        <dbReference type="ChEBI" id="CHEBI:49883"/>
        <label>2</label>
        <note>4Fe-4S-S-AdoMet</note>
    </ligand>
</feature>
<feature type="binding site" evidence="1">
    <location>
        <position position="154"/>
    </location>
    <ligand>
        <name>[4Fe-4S] cluster</name>
        <dbReference type="ChEBI" id="CHEBI:49883"/>
        <label>2</label>
        <note>4Fe-4S-S-AdoMet</note>
    </ligand>
</feature>
<feature type="binding site" evidence="1">
    <location>
        <position position="157"/>
    </location>
    <ligand>
        <name>[4Fe-4S] cluster</name>
        <dbReference type="ChEBI" id="CHEBI:49883"/>
        <label>2</label>
        <note>4Fe-4S-S-AdoMet</note>
    </ligand>
</feature>
<accession>A6T6T1</accession>
<reference key="1">
    <citation type="submission" date="2006-09" db="EMBL/GenBank/DDBJ databases">
        <authorList>
            <consortium name="The Klebsiella pneumonia Genome Sequencing Project"/>
            <person name="McClelland M."/>
            <person name="Sanderson E.K."/>
            <person name="Spieth J."/>
            <person name="Clifton W.S."/>
            <person name="Latreille P."/>
            <person name="Sabo A."/>
            <person name="Pepin K."/>
            <person name="Bhonagiri V."/>
            <person name="Porwollik S."/>
            <person name="Ali J."/>
            <person name="Wilson R.K."/>
        </authorList>
    </citation>
    <scope>NUCLEOTIDE SEQUENCE [LARGE SCALE GENOMIC DNA]</scope>
    <source>
        <strain>ATCC 700721 / MGH 78578</strain>
    </source>
</reference>
<sequence length="441" mass="49568">MSNVTHQPKIGFVSLGCPKNLVDSERILTELRTEGYDVVPTYDNADMVIVNTCGFIDSAVQESLEAIGEALKENGKVIVTGCLGAKEDQIREVHPKVLEITGPHSYEQVLEHVHHYTPKPKHNPFLSLVPEQGVKLTPRHYAYLKISEGCNHRCTFCIIPSMRGDLVSRPIGEVLAEAKRLADAGVKELLVISQDTSAYGVDVKHRTGFHNGMPVKTSMVSLCEELAKLGIWVRLHYVYPYPHVDDVIPLMAEGKILPYLDIPLQHASPRILKLMKRPGSADRQLARIKQWREICPDLTLRSTFIVGFPGETEEDFQMLLDFLKEARLDRVGCFKYSPVEGATANELADQVPEEVKEERWNRFMQLQQQISAERLQEKVGREILVLVDEVDEEGAIGRSMADAPEIDGAVYLNGETRVKPGDVVRVKVEHADEYDLWGTRV</sequence>
<dbReference type="EC" id="2.8.4.4" evidence="1"/>
<dbReference type="EMBL" id="CP000647">
    <property type="protein sequence ID" value="ABR76302.1"/>
    <property type="molecule type" value="Genomic_DNA"/>
</dbReference>
<dbReference type="RefSeq" id="WP_004141985.1">
    <property type="nucleotide sequence ID" value="NC_009648.1"/>
</dbReference>
<dbReference type="SMR" id="A6T6T1"/>
<dbReference type="STRING" id="272620.KPN_00866"/>
<dbReference type="jPOST" id="A6T6T1"/>
<dbReference type="PaxDb" id="272620-KPN_00866"/>
<dbReference type="EnsemblBacteria" id="ABR76302">
    <property type="protein sequence ID" value="ABR76302"/>
    <property type="gene ID" value="KPN_00866"/>
</dbReference>
<dbReference type="KEGG" id="kpn:KPN_00866"/>
<dbReference type="HOGENOM" id="CLU_018697_0_0_6"/>
<dbReference type="Proteomes" id="UP000000265">
    <property type="component" value="Chromosome"/>
</dbReference>
<dbReference type="GO" id="GO:0005829">
    <property type="term" value="C:cytosol"/>
    <property type="evidence" value="ECO:0007669"/>
    <property type="project" value="TreeGrafter"/>
</dbReference>
<dbReference type="GO" id="GO:0051539">
    <property type="term" value="F:4 iron, 4 sulfur cluster binding"/>
    <property type="evidence" value="ECO:0007669"/>
    <property type="project" value="UniProtKB-UniRule"/>
</dbReference>
<dbReference type="GO" id="GO:0035599">
    <property type="term" value="F:aspartic acid methylthiotransferase activity"/>
    <property type="evidence" value="ECO:0007669"/>
    <property type="project" value="TreeGrafter"/>
</dbReference>
<dbReference type="GO" id="GO:0046872">
    <property type="term" value="F:metal ion binding"/>
    <property type="evidence" value="ECO:0007669"/>
    <property type="project" value="UniProtKB-KW"/>
</dbReference>
<dbReference type="GO" id="GO:0103039">
    <property type="term" value="F:protein methylthiotransferase activity"/>
    <property type="evidence" value="ECO:0007669"/>
    <property type="project" value="UniProtKB-EC"/>
</dbReference>
<dbReference type="GO" id="GO:0006400">
    <property type="term" value="P:tRNA modification"/>
    <property type="evidence" value="ECO:0007669"/>
    <property type="project" value="InterPro"/>
</dbReference>
<dbReference type="CDD" id="cd01335">
    <property type="entry name" value="Radical_SAM"/>
    <property type="match status" value="1"/>
</dbReference>
<dbReference type="FunFam" id="2.40.50.140:FF:000060">
    <property type="entry name" value="Ribosomal protein S12 methylthiotransferase RimO"/>
    <property type="match status" value="1"/>
</dbReference>
<dbReference type="FunFam" id="3.40.50.12160:FF:000002">
    <property type="entry name" value="Ribosomal protein S12 methylthiotransferase RimO"/>
    <property type="match status" value="1"/>
</dbReference>
<dbReference type="FunFam" id="3.80.30.20:FF:000001">
    <property type="entry name" value="tRNA-2-methylthio-N(6)-dimethylallyladenosine synthase 2"/>
    <property type="match status" value="1"/>
</dbReference>
<dbReference type="Gene3D" id="3.40.50.12160">
    <property type="entry name" value="Methylthiotransferase, N-terminal domain"/>
    <property type="match status" value="1"/>
</dbReference>
<dbReference type="Gene3D" id="2.40.50.140">
    <property type="entry name" value="Nucleic acid-binding proteins"/>
    <property type="match status" value="1"/>
</dbReference>
<dbReference type="Gene3D" id="3.80.30.20">
    <property type="entry name" value="tm_1862 like domain"/>
    <property type="match status" value="1"/>
</dbReference>
<dbReference type="HAMAP" id="MF_01865">
    <property type="entry name" value="MTTase_RimO"/>
    <property type="match status" value="1"/>
</dbReference>
<dbReference type="InterPro" id="IPR006638">
    <property type="entry name" value="Elp3/MiaA/NifB-like_rSAM"/>
</dbReference>
<dbReference type="InterPro" id="IPR005839">
    <property type="entry name" value="Methylthiotransferase"/>
</dbReference>
<dbReference type="InterPro" id="IPR020612">
    <property type="entry name" value="Methylthiotransferase_CS"/>
</dbReference>
<dbReference type="InterPro" id="IPR013848">
    <property type="entry name" value="Methylthiotransferase_N"/>
</dbReference>
<dbReference type="InterPro" id="IPR038135">
    <property type="entry name" value="Methylthiotransferase_N_sf"/>
</dbReference>
<dbReference type="InterPro" id="IPR012340">
    <property type="entry name" value="NA-bd_OB-fold"/>
</dbReference>
<dbReference type="InterPro" id="IPR005840">
    <property type="entry name" value="Ribosomal_uS12_MeSTrfase_RimO"/>
</dbReference>
<dbReference type="InterPro" id="IPR007197">
    <property type="entry name" value="rSAM"/>
</dbReference>
<dbReference type="InterPro" id="IPR023404">
    <property type="entry name" value="rSAM_horseshoe"/>
</dbReference>
<dbReference type="InterPro" id="IPR002792">
    <property type="entry name" value="TRAM_dom"/>
</dbReference>
<dbReference type="NCBIfam" id="TIGR01125">
    <property type="entry name" value="30S ribosomal protein S12 methylthiotransferase RimO"/>
    <property type="match status" value="1"/>
</dbReference>
<dbReference type="NCBIfam" id="TIGR00089">
    <property type="entry name" value="MiaB/RimO family radical SAM methylthiotransferase"/>
    <property type="match status" value="1"/>
</dbReference>
<dbReference type="PANTHER" id="PTHR43837">
    <property type="entry name" value="RIBOSOMAL PROTEIN S12 METHYLTHIOTRANSFERASE RIMO"/>
    <property type="match status" value="1"/>
</dbReference>
<dbReference type="PANTHER" id="PTHR43837:SF1">
    <property type="entry name" value="RIBOSOMAL PROTEIN US12 METHYLTHIOTRANSFERASE RIMO"/>
    <property type="match status" value="1"/>
</dbReference>
<dbReference type="Pfam" id="PF04055">
    <property type="entry name" value="Radical_SAM"/>
    <property type="match status" value="1"/>
</dbReference>
<dbReference type="Pfam" id="PF18693">
    <property type="entry name" value="TRAM_2"/>
    <property type="match status" value="1"/>
</dbReference>
<dbReference type="Pfam" id="PF00919">
    <property type="entry name" value="UPF0004"/>
    <property type="match status" value="1"/>
</dbReference>
<dbReference type="SFLD" id="SFLDG01082">
    <property type="entry name" value="B12-binding_domain_containing"/>
    <property type="match status" value="1"/>
</dbReference>
<dbReference type="SFLD" id="SFLDG01061">
    <property type="entry name" value="methylthiotransferase"/>
    <property type="match status" value="1"/>
</dbReference>
<dbReference type="SFLD" id="SFLDF00274">
    <property type="entry name" value="ribosomal_protein_S12_methylth"/>
    <property type="match status" value="1"/>
</dbReference>
<dbReference type="SMART" id="SM00729">
    <property type="entry name" value="Elp3"/>
    <property type="match status" value="1"/>
</dbReference>
<dbReference type="SUPFAM" id="SSF102114">
    <property type="entry name" value="Radical SAM enzymes"/>
    <property type="match status" value="1"/>
</dbReference>
<dbReference type="PROSITE" id="PS51449">
    <property type="entry name" value="MTTASE_N"/>
    <property type="match status" value="1"/>
</dbReference>
<dbReference type="PROSITE" id="PS01278">
    <property type="entry name" value="MTTASE_RADICAL"/>
    <property type="match status" value="1"/>
</dbReference>
<dbReference type="PROSITE" id="PS51918">
    <property type="entry name" value="RADICAL_SAM"/>
    <property type="match status" value="1"/>
</dbReference>
<dbReference type="PROSITE" id="PS50926">
    <property type="entry name" value="TRAM"/>
    <property type="match status" value="1"/>
</dbReference>
<organism>
    <name type="scientific">Klebsiella pneumoniae subsp. pneumoniae (strain ATCC 700721 / MGH 78578)</name>
    <dbReference type="NCBI Taxonomy" id="272620"/>
    <lineage>
        <taxon>Bacteria</taxon>
        <taxon>Pseudomonadati</taxon>
        <taxon>Pseudomonadota</taxon>
        <taxon>Gammaproteobacteria</taxon>
        <taxon>Enterobacterales</taxon>
        <taxon>Enterobacteriaceae</taxon>
        <taxon>Klebsiella/Raoultella group</taxon>
        <taxon>Klebsiella</taxon>
        <taxon>Klebsiella pneumoniae complex</taxon>
    </lineage>
</organism>
<comment type="function">
    <text evidence="1">Catalyzes the methylthiolation of an aspartic acid residue of ribosomal protein uS12.</text>
</comment>
<comment type="catalytic activity">
    <reaction evidence="1">
        <text>L-aspartate(89)-[ribosomal protein uS12]-hydrogen + (sulfur carrier)-SH + AH2 + 2 S-adenosyl-L-methionine = 3-methylsulfanyl-L-aspartate(89)-[ribosomal protein uS12]-hydrogen + (sulfur carrier)-H + 5'-deoxyadenosine + L-methionine + A + S-adenosyl-L-homocysteine + 2 H(+)</text>
        <dbReference type="Rhea" id="RHEA:37087"/>
        <dbReference type="Rhea" id="RHEA-COMP:10460"/>
        <dbReference type="Rhea" id="RHEA-COMP:10461"/>
        <dbReference type="Rhea" id="RHEA-COMP:14737"/>
        <dbReference type="Rhea" id="RHEA-COMP:14739"/>
        <dbReference type="ChEBI" id="CHEBI:13193"/>
        <dbReference type="ChEBI" id="CHEBI:15378"/>
        <dbReference type="ChEBI" id="CHEBI:17319"/>
        <dbReference type="ChEBI" id="CHEBI:17499"/>
        <dbReference type="ChEBI" id="CHEBI:29917"/>
        <dbReference type="ChEBI" id="CHEBI:29961"/>
        <dbReference type="ChEBI" id="CHEBI:57844"/>
        <dbReference type="ChEBI" id="CHEBI:57856"/>
        <dbReference type="ChEBI" id="CHEBI:59789"/>
        <dbReference type="ChEBI" id="CHEBI:64428"/>
        <dbReference type="ChEBI" id="CHEBI:73599"/>
        <dbReference type="EC" id="2.8.4.4"/>
    </reaction>
</comment>
<comment type="cofactor">
    <cofactor evidence="1">
        <name>[4Fe-4S] cluster</name>
        <dbReference type="ChEBI" id="CHEBI:49883"/>
    </cofactor>
    <text evidence="1">Binds 2 [4Fe-4S] clusters. One cluster is coordinated with 3 cysteines and an exchangeable S-adenosyl-L-methionine.</text>
</comment>
<comment type="subcellular location">
    <subcellularLocation>
        <location evidence="1">Cytoplasm</location>
    </subcellularLocation>
</comment>
<comment type="similarity">
    <text evidence="1">Belongs to the methylthiotransferase family. RimO subfamily.</text>
</comment>
<name>RIMO_KLEP7</name>